<reference key="1">
    <citation type="journal article" date="2001" name="Proc. Natl. Acad. Sci. U.S.A.">
        <title>Complete genomic sequence of Pasteurella multocida Pm70.</title>
        <authorList>
            <person name="May B.J."/>
            <person name="Zhang Q."/>
            <person name="Li L.L."/>
            <person name="Paustian M.L."/>
            <person name="Whittam T.S."/>
            <person name="Kapur V."/>
        </authorList>
    </citation>
    <scope>NUCLEOTIDE SEQUENCE [LARGE SCALE GENOMIC DNA]</scope>
    <source>
        <strain>Pm70</strain>
    </source>
</reference>
<keyword id="KW-0067">ATP-binding</keyword>
<keyword id="KW-0963">Cytoplasm</keyword>
<keyword id="KW-0436">Ligase</keyword>
<keyword id="KW-0547">Nucleotide-binding</keyword>
<keyword id="KW-0658">Purine biosynthesis</keyword>
<keyword id="KW-1185">Reference proteome</keyword>
<name>PUR5_PASMU</name>
<gene>
    <name evidence="1" type="primary">purM</name>
    <name type="ordered locus">PM0021</name>
</gene>
<organism>
    <name type="scientific">Pasteurella multocida (strain Pm70)</name>
    <dbReference type="NCBI Taxonomy" id="272843"/>
    <lineage>
        <taxon>Bacteria</taxon>
        <taxon>Pseudomonadati</taxon>
        <taxon>Pseudomonadota</taxon>
        <taxon>Gammaproteobacteria</taxon>
        <taxon>Pasteurellales</taxon>
        <taxon>Pasteurellaceae</taxon>
        <taxon>Pasteurella</taxon>
    </lineage>
</organism>
<feature type="chain" id="PRO_0000148228" description="Phosphoribosylformylglycinamidine cyclo-ligase">
    <location>
        <begin position="1"/>
        <end position="345"/>
    </location>
</feature>
<accession>Q9CPL6</accession>
<evidence type="ECO:0000255" key="1">
    <source>
        <dbReference type="HAMAP-Rule" id="MF_00741"/>
    </source>
</evidence>
<sequence>MSKQSLSYKDAGVDINAGNALVEKIKADVKRTTRPEVIGGLGGFGALCAIPTKYKEPILVSGTDGVGTKLRLAIDLNRHDSIGIDLVAMCVNDLVVQGAEPLFFLDYYATGKLDVDVAASVIKGIANGCEQSGCALVGGETAEMPGMYHAGDYDLAGFCVGVVEKSDIIDGSKVRVGDVLIALGSSGPHSNGYSLIRKVIEVAGINPAEEQLAGKPLADQVLAPTKIYVKSILQLIKHADVHAICHLTGGGFWENIPRVLPKNVKAVIDESSWEWQPVFKWLQEKGNIDTHEMYRTFNCGVGMIIALPQEDVDTALGLLKQTGEKAWVIGQIEHATDGEEQVIIR</sequence>
<comment type="catalytic activity">
    <reaction evidence="1">
        <text>2-formamido-N(1)-(5-O-phospho-beta-D-ribosyl)acetamidine + ATP = 5-amino-1-(5-phospho-beta-D-ribosyl)imidazole + ADP + phosphate + H(+)</text>
        <dbReference type="Rhea" id="RHEA:23032"/>
        <dbReference type="ChEBI" id="CHEBI:15378"/>
        <dbReference type="ChEBI" id="CHEBI:30616"/>
        <dbReference type="ChEBI" id="CHEBI:43474"/>
        <dbReference type="ChEBI" id="CHEBI:137981"/>
        <dbReference type="ChEBI" id="CHEBI:147287"/>
        <dbReference type="ChEBI" id="CHEBI:456216"/>
        <dbReference type="EC" id="6.3.3.1"/>
    </reaction>
</comment>
<comment type="pathway">
    <text evidence="1">Purine metabolism; IMP biosynthesis via de novo pathway; 5-amino-1-(5-phospho-D-ribosyl)imidazole from N(2)-formyl-N(1)-(5-phospho-D-ribosyl)glycinamide: step 2/2.</text>
</comment>
<comment type="subcellular location">
    <subcellularLocation>
        <location evidence="1">Cytoplasm</location>
    </subcellularLocation>
</comment>
<comment type="similarity">
    <text evidence="1">Belongs to the AIR synthase family.</text>
</comment>
<proteinExistence type="inferred from homology"/>
<protein>
    <recommendedName>
        <fullName evidence="1">Phosphoribosylformylglycinamidine cyclo-ligase</fullName>
        <ecNumber evidence="1">6.3.3.1</ecNumber>
    </recommendedName>
    <alternativeName>
        <fullName evidence="1">AIR synthase</fullName>
    </alternativeName>
    <alternativeName>
        <fullName evidence="1">AIRS</fullName>
    </alternativeName>
    <alternativeName>
        <fullName evidence="1">Phosphoribosyl-aminoimidazole synthetase</fullName>
    </alternativeName>
</protein>
<dbReference type="EC" id="6.3.3.1" evidence="1"/>
<dbReference type="EMBL" id="AE004439">
    <property type="protein sequence ID" value="AAK02105.1"/>
    <property type="molecule type" value="Genomic_DNA"/>
</dbReference>
<dbReference type="RefSeq" id="WP_005751010.1">
    <property type="nucleotide sequence ID" value="NC_002663.1"/>
</dbReference>
<dbReference type="SMR" id="Q9CPL6"/>
<dbReference type="STRING" id="272843.PM0021"/>
<dbReference type="EnsemblBacteria" id="AAK02105">
    <property type="protein sequence ID" value="AAK02105"/>
    <property type="gene ID" value="PM0021"/>
</dbReference>
<dbReference type="KEGG" id="pmu:PM0021"/>
<dbReference type="PATRIC" id="fig|272843.6.peg.21"/>
<dbReference type="HOGENOM" id="CLU_047116_0_0_6"/>
<dbReference type="OrthoDB" id="9777881at2"/>
<dbReference type="UniPathway" id="UPA00074">
    <property type="reaction ID" value="UER00129"/>
</dbReference>
<dbReference type="Proteomes" id="UP000000809">
    <property type="component" value="Chromosome"/>
</dbReference>
<dbReference type="GO" id="GO:0005829">
    <property type="term" value="C:cytosol"/>
    <property type="evidence" value="ECO:0007669"/>
    <property type="project" value="TreeGrafter"/>
</dbReference>
<dbReference type="GO" id="GO:0005524">
    <property type="term" value="F:ATP binding"/>
    <property type="evidence" value="ECO:0007669"/>
    <property type="project" value="UniProtKB-KW"/>
</dbReference>
<dbReference type="GO" id="GO:0004637">
    <property type="term" value="F:phosphoribosylamine-glycine ligase activity"/>
    <property type="evidence" value="ECO:0007669"/>
    <property type="project" value="TreeGrafter"/>
</dbReference>
<dbReference type="GO" id="GO:0004641">
    <property type="term" value="F:phosphoribosylformylglycinamidine cyclo-ligase activity"/>
    <property type="evidence" value="ECO:0007669"/>
    <property type="project" value="UniProtKB-UniRule"/>
</dbReference>
<dbReference type="GO" id="GO:0006189">
    <property type="term" value="P:'de novo' IMP biosynthetic process"/>
    <property type="evidence" value="ECO:0007669"/>
    <property type="project" value="UniProtKB-UniRule"/>
</dbReference>
<dbReference type="GO" id="GO:0046084">
    <property type="term" value="P:adenine biosynthetic process"/>
    <property type="evidence" value="ECO:0007669"/>
    <property type="project" value="TreeGrafter"/>
</dbReference>
<dbReference type="CDD" id="cd02196">
    <property type="entry name" value="PurM"/>
    <property type="match status" value="1"/>
</dbReference>
<dbReference type="FunFam" id="3.30.1330.10:FF:000001">
    <property type="entry name" value="Phosphoribosylformylglycinamidine cyclo-ligase"/>
    <property type="match status" value="1"/>
</dbReference>
<dbReference type="FunFam" id="3.90.650.10:FF:000001">
    <property type="entry name" value="Phosphoribosylformylglycinamidine cyclo-ligase"/>
    <property type="match status" value="1"/>
</dbReference>
<dbReference type="Gene3D" id="3.90.650.10">
    <property type="entry name" value="PurM-like C-terminal domain"/>
    <property type="match status" value="1"/>
</dbReference>
<dbReference type="Gene3D" id="3.30.1330.10">
    <property type="entry name" value="PurM-like, N-terminal domain"/>
    <property type="match status" value="1"/>
</dbReference>
<dbReference type="HAMAP" id="MF_00741">
    <property type="entry name" value="AIRS"/>
    <property type="match status" value="1"/>
</dbReference>
<dbReference type="InterPro" id="IPR010918">
    <property type="entry name" value="PurM-like_C_dom"/>
</dbReference>
<dbReference type="InterPro" id="IPR036676">
    <property type="entry name" value="PurM-like_C_sf"/>
</dbReference>
<dbReference type="InterPro" id="IPR016188">
    <property type="entry name" value="PurM-like_N"/>
</dbReference>
<dbReference type="InterPro" id="IPR036921">
    <property type="entry name" value="PurM-like_N_sf"/>
</dbReference>
<dbReference type="InterPro" id="IPR004733">
    <property type="entry name" value="PurM_cligase"/>
</dbReference>
<dbReference type="NCBIfam" id="TIGR00878">
    <property type="entry name" value="purM"/>
    <property type="match status" value="1"/>
</dbReference>
<dbReference type="PANTHER" id="PTHR10520:SF12">
    <property type="entry name" value="TRIFUNCTIONAL PURINE BIOSYNTHETIC PROTEIN ADENOSINE-3"/>
    <property type="match status" value="1"/>
</dbReference>
<dbReference type="PANTHER" id="PTHR10520">
    <property type="entry name" value="TRIFUNCTIONAL PURINE BIOSYNTHETIC PROTEIN ADENOSINE-3-RELATED"/>
    <property type="match status" value="1"/>
</dbReference>
<dbReference type="Pfam" id="PF00586">
    <property type="entry name" value="AIRS"/>
    <property type="match status" value="1"/>
</dbReference>
<dbReference type="Pfam" id="PF02769">
    <property type="entry name" value="AIRS_C"/>
    <property type="match status" value="1"/>
</dbReference>
<dbReference type="SUPFAM" id="SSF56042">
    <property type="entry name" value="PurM C-terminal domain-like"/>
    <property type="match status" value="1"/>
</dbReference>
<dbReference type="SUPFAM" id="SSF55326">
    <property type="entry name" value="PurM N-terminal domain-like"/>
    <property type="match status" value="1"/>
</dbReference>